<gene>
    <name type="primary">CYP725A1</name>
</gene>
<proteinExistence type="evidence at protein level"/>
<protein>
    <recommendedName>
        <fullName>Taxane 10-beta-hydroxylase</fullName>
        <ecNumber evidence="2">1.14.14.105</ecNumber>
    </recommendedName>
    <alternativeName>
        <fullName>5-alpha-taxadienol-10-beta-hydroxylase</fullName>
    </alternativeName>
    <alternativeName>
        <fullName>Cytochrome P450 725A1</fullName>
    </alternativeName>
</protein>
<dbReference type="EC" id="1.14.14.105" evidence="2"/>
<dbReference type="EMBL" id="AF318211">
    <property type="protein sequence ID" value="AAK00946.1"/>
    <property type="molecule type" value="mRNA"/>
</dbReference>
<dbReference type="SMR" id="Q9AXM6"/>
<dbReference type="KEGG" id="ag:AAK00946"/>
<dbReference type="BioCyc" id="MetaCyc:MONOMER-13401"/>
<dbReference type="BRENDA" id="1.14.14.105">
    <property type="organism ID" value="6225"/>
</dbReference>
<dbReference type="UniPathway" id="UPA00842">
    <property type="reaction ID" value="UER00809"/>
</dbReference>
<dbReference type="GO" id="GO:0020037">
    <property type="term" value="F:heme binding"/>
    <property type="evidence" value="ECO:0007669"/>
    <property type="project" value="InterPro"/>
</dbReference>
<dbReference type="GO" id="GO:0005506">
    <property type="term" value="F:iron ion binding"/>
    <property type="evidence" value="ECO:0007669"/>
    <property type="project" value="InterPro"/>
</dbReference>
<dbReference type="GO" id="GO:0050597">
    <property type="term" value="F:taxane 10-beta-hydroxylase activity"/>
    <property type="evidence" value="ECO:0007669"/>
    <property type="project" value="UniProtKB-EC"/>
</dbReference>
<dbReference type="GO" id="GO:0042617">
    <property type="term" value="P:paclitaxel biosynthetic process"/>
    <property type="evidence" value="ECO:0007669"/>
    <property type="project" value="UniProtKB-UniPathway"/>
</dbReference>
<dbReference type="GO" id="GO:0016125">
    <property type="term" value="P:sterol metabolic process"/>
    <property type="evidence" value="ECO:0007669"/>
    <property type="project" value="TreeGrafter"/>
</dbReference>
<dbReference type="CDD" id="cd11043">
    <property type="entry name" value="CYP90-like"/>
    <property type="match status" value="1"/>
</dbReference>
<dbReference type="FunFam" id="1.10.630.10:FF:000022">
    <property type="entry name" value="Taxadiene 5-alpha hydroxylase"/>
    <property type="match status" value="1"/>
</dbReference>
<dbReference type="Gene3D" id="1.10.630.10">
    <property type="entry name" value="Cytochrome P450"/>
    <property type="match status" value="1"/>
</dbReference>
<dbReference type="InterPro" id="IPR001128">
    <property type="entry name" value="Cyt_P450"/>
</dbReference>
<dbReference type="InterPro" id="IPR017972">
    <property type="entry name" value="Cyt_P450_CS"/>
</dbReference>
<dbReference type="InterPro" id="IPR002401">
    <property type="entry name" value="Cyt_P450_E_grp-I"/>
</dbReference>
<dbReference type="InterPro" id="IPR036396">
    <property type="entry name" value="Cyt_P450_sf"/>
</dbReference>
<dbReference type="PANTHER" id="PTHR24286">
    <property type="entry name" value="CYTOCHROME P450 26"/>
    <property type="match status" value="1"/>
</dbReference>
<dbReference type="PANTHER" id="PTHR24286:SF384">
    <property type="entry name" value="P450, PUTATIVE (EUROFUNG)-RELATED"/>
    <property type="match status" value="1"/>
</dbReference>
<dbReference type="Pfam" id="PF00067">
    <property type="entry name" value="p450"/>
    <property type="match status" value="1"/>
</dbReference>
<dbReference type="PRINTS" id="PR00463">
    <property type="entry name" value="EP450I"/>
</dbReference>
<dbReference type="PRINTS" id="PR00385">
    <property type="entry name" value="P450"/>
</dbReference>
<dbReference type="SUPFAM" id="SSF48264">
    <property type="entry name" value="Cytochrome P450"/>
    <property type="match status" value="1"/>
</dbReference>
<dbReference type="PROSITE" id="PS00086">
    <property type="entry name" value="CYTOCHROME_P450"/>
    <property type="match status" value="1"/>
</dbReference>
<organism>
    <name type="scientific">Taxus cuspidata</name>
    <name type="common">Japanese yew</name>
    <dbReference type="NCBI Taxonomy" id="99806"/>
    <lineage>
        <taxon>Eukaryota</taxon>
        <taxon>Viridiplantae</taxon>
        <taxon>Streptophyta</taxon>
        <taxon>Embryophyta</taxon>
        <taxon>Tracheophyta</taxon>
        <taxon>Spermatophyta</taxon>
        <taxon>Pinopsida</taxon>
        <taxon>Pinidae</taxon>
        <taxon>Conifers II</taxon>
        <taxon>Cupressales</taxon>
        <taxon>Taxaceae</taxon>
        <taxon>Taxus</taxon>
    </lineage>
</organism>
<sequence length="497" mass="56691">MDSFIFLRSIGTKFGQLESSPAILSLTLAPILAIILLLLFRYNHRSSVKLPPGKLGFPLIGETIQLLRTLRSETPQKFFDDRLKKFGPVYMTSLIGHPTVVLCGPAGNKLVLSNEDKLVEMEGPKSFMKLIGEDSIVAKRGEDHRILRTALARFLGAQALQNYLGRMSSEIGHHFNEKWKGKDEVKVLPLVRGLIFSIASTLFFDVNDGHQQKQLHHLLETILVGSLSVPLDFPGTRYRKGLQARLKLDEILSSLIKRRRRDLRSGIASDDQDLLSVLLTFRDEKGNSLTDQGILDNFSAMFHASYDTTVAPMALIFKLLYSNPEYHEKVFQEQLEIIGNKKEGEEISWKDLKSMKYTWQAVQESLRMYPPVFGIFRKAITDIHYDGYTIPKGWRVLCSPYTTHLREEYFPEPEEFRPSRFEDEGRHVTPYTYVPFGGGLRTCPGWEFSKIEILLFVHHFVKNFSSYIPVDPNEKVLSDPLPPLPANGFSIKLFPRS</sequence>
<name>T10H_TAXCU</name>
<keyword id="KW-0349">Heme</keyword>
<keyword id="KW-0408">Iron</keyword>
<keyword id="KW-0479">Metal-binding</keyword>
<keyword id="KW-0503">Monooxygenase</keyword>
<keyword id="KW-0560">Oxidoreductase</keyword>
<keyword id="KW-0876">Taxol biosynthesis</keyword>
<accession>Q9AXM6</accession>
<evidence type="ECO:0000250" key="1"/>
<evidence type="ECO:0000269" key="2">
    <source>
    </source>
</evidence>
<evidence type="ECO:0000305" key="3"/>
<reference key="1">
    <citation type="journal article" date="2001" name="Proc. Natl. Acad. Sci. U.S.A.">
        <title>Molecular cloning of a cytochrome P450 taxane 10beta-hydroxylase cDNA from Taxus and functional expression in yeast.</title>
        <authorList>
            <person name="Schoendorf A."/>
            <person name="Rithner C.D."/>
            <person name="Williams R.M."/>
            <person name="Croteau R.B."/>
        </authorList>
    </citation>
    <scope>NUCLEOTIDE SEQUENCE [MRNA]</scope>
    <scope>FUNCTION</scope>
    <scope>CATALYTIC ACTIVITY</scope>
    <scope>CHARACTERIZATION</scope>
</reference>
<comment type="function">
    <text evidence="2">Involved in the transformation of a taxadienyl acetate by hydroxylation at C10 to yield taxadien-5-alpha-acetoxy-10-beta-ol.</text>
</comment>
<comment type="catalytic activity">
    <reaction evidence="2">
        <text>taxa-4(20),11-dien-5alpha-yl acetate + reduced [NADPH--hemoprotein reductase] + O2 = 10beta-hydroxytaxa-4(20),11-dien-5alpha-yl acetate + oxidized [NADPH--hemoprotein reductase] + H2O + H(+)</text>
        <dbReference type="Rhea" id="RHEA:15241"/>
        <dbReference type="Rhea" id="RHEA-COMP:11964"/>
        <dbReference type="Rhea" id="RHEA-COMP:11965"/>
        <dbReference type="ChEBI" id="CHEBI:15377"/>
        <dbReference type="ChEBI" id="CHEBI:15378"/>
        <dbReference type="ChEBI" id="CHEBI:15379"/>
        <dbReference type="ChEBI" id="CHEBI:30042"/>
        <dbReference type="ChEBI" id="CHEBI:50436"/>
        <dbReference type="ChEBI" id="CHEBI:57618"/>
        <dbReference type="ChEBI" id="CHEBI:58210"/>
        <dbReference type="EC" id="1.14.14.105"/>
    </reaction>
</comment>
<comment type="cofactor">
    <cofactor evidence="1">
        <name>heme</name>
        <dbReference type="ChEBI" id="CHEBI:30413"/>
    </cofactor>
</comment>
<comment type="pathway">
    <text>Alkaloid biosynthesis; taxol biosynthesis; 10-deacetyl-2-debenzoylbaccatin III from taxa-4(20),11-dien-5alpha-ol: step 2/3.</text>
</comment>
<comment type="similarity">
    <text evidence="3">Belongs to the cytochrome P450 family.</text>
</comment>
<feature type="chain" id="PRO_0000052202" description="Taxane 10-beta-hydroxylase">
    <location>
        <begin position="1"/>
        <end position="497"/>
    </location>
</feature>
<feature type="binding site" description="axial binding residue" evidence="1">
    <location>
        <position position="443"/>
    </location>
    <ligand>
        <name>heme</name>
        <dbReference type="ChEBI" id="CHEBI:30413"/>
    </ligand>
    <ligandPart>
        <name>Fe</name>
        <dbReference type="ChEBI" id="CHEBI:18248"/>
    </ligandPart>
</feature>